<keyword id="KW-0131">Cell cycle</keyword>
<keyword id="KW-0132">Cell division</keyword>
<keyword id="KW-0159">Chromosome partition</keyword>
<keyword id="KW-0963">Cytoplasm</keyword>
<keyword id="KW-0229">DNA integration</keyword>
<keyword id="KW-0233">DNA recombination</keyword>
<keyword id="KW-0238">DNA-binding</keyword>
<gene>
    <name evidence="1" type="primary">xerC</name>
    <name type="ordered locus">SACOL1269</name>
</gene>
<sequence length="298" mass="35113">MNHIQDAFLNTLKVERNFSEHTLKSYQDDLIQFNQFLEQEHLELNTFEYRDARNYLSYLYSNHLKRTSVSRKISTLRTFYEYWMTLDENIINPFVQLVHPKKEKYLPQFFYEEEMEALFKTVEEDTSKNLRDRVILELLYATGIRVSELVNIKKQDIDFYANGVTVLGKGSKERFVPFGAYCRQSIENYLEHFKPIQSCNHDFLIVNMKGEAITERGVRYVLNDIVKRTAGVSEIHPHKLRHTFATHLLNQGADLRTVQSLLGHVNLSTTGKYTHVSNQQLRKVYLNAHPRAKKENET</sequence>
<name>XERC_STAAC</name>
<evidence type="ECO:0000255" key="1">
    <source>
        <dbReference type="HAMAP-Rule" id="MF_01808"/>
    </source>
</evidence>
<evidence type="ECO:0000255" key="2">
    <source>
        <dbReference type="PROSITE-ProRule" id="PRU01246"/>
    </source>
</evidence>
<evidence type="ECO:0000255" key="3">
    <source>
        <dbReference type="PROSITE-ProRule" id="PRU01248"/>
    </source>
</evidence>
<accession>Q5HGI0</accession>
<organism>
    <name type="scientific">Staphylococcus aureus (strain COL)</name>
    <dbReference type="NCBI Taxonomy" id="93062"/>
    <lineage>
        <taxon>Bacteria</taxon>
        <taxon>Bacillati</taxon>
        <taxon>Bacillota</taxon>
        <taxon>Bacilli</taxon>
        <taxon>Bacillales</taxon>
        <taxon>Staphylococcaceae</taxon>
        <taxon>Staphylococcus</taxon>
    </lineage>
</organism>
<reference key="1">
    <citation type="journal article" date="2005" name="J. Bacteriol.">
        <title>Insights on evolution of virulence and resistance from the complete genome analysis of an early methicillin-resistant Staphylococcus aureus strain and a biofilm-producing methicillin-resistant Staphylococcus epidermidis strain.</title>
        <authorList>
            <person name="Gill S.R."/>
            <person name="Fouts D.E."/>
            <person name="Archer G.L."/>
            <person name="Mongodin E.F."/>
            <person name="DeBoy R.T."/>
            <person name="Ravel J."/>
            <person name="Paulsen I.T."/>
            <person name="Kolonay J.F."/>
            <person name="Brinkac L.M."/>
            <person name="Beanan M.J."/>
            <person name="Dodson R.J."/>
            <person name="Daugherty S.C."/>
            <person name="Madupu R."/>
            <person name="Angiuoli S.V."/>
            <person name="Durkin A.S."/>
            <person name="Haft D.H."/>
            <person name="Vamathevan J.J."/>
            <person name="Khouri H."/>
            <person name="Utterback T.R."/>
            <person name="Lee C."/>
            <person name="Dimitrov G."/>
            <person name="Jiang L."/>
            <person name="Qin H."/>
            <person name="Weidman J."/>
            <person name="Tran K."/>
            <person name="Kang K.H."/>
            <person name="Hance I.R."/>
            <person name="Nelson K.E."/>
            <person name="Fraser C.M."/>
        </authorList>
    </citation>
    <scope>NUCLEOTIDE SEQUENCE [LARGE SCALE GENOMIC DNA]</scope>
    <source>
        <strain>COL</strain>
    </source>
</reference>
<dbReference type="EMBL" id="CP000046">
    <property type="protein sequence ID" value="AAW38101.1"/>
    <property type="molecule type" value="Genomic_DNA"/>
</dbReference>
<dbReference type="RefSeq" id="WP_001015597.1">
    <property type="nucleotide sequence ID" value="NZ_JBGOFO010000002.1"/>
</dbReference>
<dbReference type="SMR" id="Q5HGI0"/>
<dbReference type="KEGG" id="sac:SACOL1269"/>
<dbReference type="HOGENOM" id="CLU_027562_9_0_9"/>
<dbReference type="Proteomes" id="UP000000530">
    <property type="component" value="Chromosome"/>
</dbReference>
<dbReference type="GO" id="GO:0005737">
    <property type="term" value="C:cytoplasm"/>
    <property type="evidence" value="ECO:0007669"/>
    <property type="project" value="UniProtKB-SubCell"/>
</dbReference>
<dbReference type="GO" id="GO:0003677">
    <property type="term" value="F:DNA binding"/>
    <property type="evidence" value="ECO:0007669"/>
    <property type="project" value="UniProtKB-KW"/>
</dbReference>
<dbReference type="GO" id="GO:0009037">
    <property type="term" value="F:tyrosine-based site-specific recombinase activity"/>
    <property type="evidence" value="ECO:0007669"/>
    <property type="project" value="UniProtKB-UniRule"/>
</dbReference>
<dbReference type="GO" id="GO:0051301">
    <property type="term" value="P:cell division"/>
    <property type="evidence" value="ECO:0007669"/>
    <property type="project" value="UniProtKB-KW"/>
</dbReference>
<dbReference type="GO" id="GO:0007059">
    <property type="term" value="P:chromosome segregation"/>
    <property type="evidence" value="ECO:0007669"/>
    <property type="project" value="UniProtKB-UniRule"/>
</dbReference>
<dbReference type="GO" id="GO:0006313">
    <property type="term" value="P:DNA transposition"/>
    <property type="evidence" value="ECO:0007669"/>
    <property type="project" value="UniProtKB-UniRule"/>
</dbReference>
<dbReference type="CDD" id="cd00798">
    <property type="entry name" value="INT_XerDC_C"/>
    <property type="match status" value="1"/>
</dbReference>
<dbReference type="Gene3D" id="1.10.150.130">
    <property type="match status" value="1"/>
</dbReference>
<dbReference type="Gene3D" id="1.10.443.10">
    <property type="entry name" value="Intergrase catalytic core"/>
    <property type="match status" value="1"/>
</dbReference>
<dbReference type="HAMAP" id="MF_01808">
    <property type="entry name" value="Recomb_XerC_XerD"/>
    <property type="match status" value="1"/>
</dbReference>
<dbReference type="InterPro" id="IPR044068">
    <property type="entry name" value="CB"/>
</dbReference>
<dbReference type="InterPro" id="IPR011010">
    <property type="entry name" value="DNA_brk_join_enz"/>
</dbReference>
<dbReference type="InterPro" id="IPR013762">
    <property type="entry name" value="Integrase-like_cat_sf"/>
</dbReference>
<dbReference type="InterPro" id="IPR002104">
    <property type="entry name" value="Integrase_catalytic"/>
</dbReference>
<dbReference type="InterPro" id="IPR010998">
    <property type="entry name" value="Integrase_recombinase_N"/>
</dbReference>
<dbReference type="InterPro" id="IPR004107">
    <property type="entry name" value="Integrase_SAM-like_N"/>
</dbReference>
<dbReference type="InterPro" id="IPR011931">
    <property type="entry name" value="Recomb_XerC"/>
</dbReference>
<dbReference type="InterPro" id="IPR023009">
    <property type="entry name" value="Tyrosine_recombinase_XerC/XerD"/>
</dbReference>
<dbReference type="InterPro" id="IPR050090">
    <property type="entry name" value="Tyrosine_recombinase_XerCD"/>
</dbReference>
<dbReference type="NCBIfam" id="NF001399">
    <property type="entry name" value="PRK00283.1"/>
    <property type="match status" value="1"/>
</dbReference>
<dbReference type="NCBIfam" id="NF040815">
    <property type="entry name" value="recomb_XerA_Arch"/>
    <property type="match status" value="1"/>
</dbReference>
<dbReference type="NCBIfam" id="TIGR02224">
    <property type="entry name" value="recomb_XerC"/>
    <property type="match status" value="1"/>
</dbReference>
<dbReference type="PANTHER" id="PTHR30349">
    <property type="entry name" value="PHAGE INTEGRASE-RELATED"/>
    <property type="match status" value="1"/>
</dbReference>
<dbReference type="PANTHER" id="PTHR30349:SF77">
    <property type="entry name" value="TYROSINE RECOMBINASE XERC"/>
    <property type="match status" value="1"/>
</dbReference>
<dbReference type="Pfam" id="PF02899">
    <property type="entry name" value="Phage_int_SAM_1"/>
    <property type="match status" value="1"/>
</dbReference>
<dbReference type="Pfam" id="PF00589">
    <property type="entry name" value="Phage_integrase"/>
    <property type="match status" value="1"/>
</dbReference>
<dbReference type="SUPFAM" id="SSF56349">
    <property type="entry name" value="DNA breaking-rejoining enzymes"/>
    <property type="match status" value="1"/>
</dbReference>
<dbReference type="PROSITE" id="PS51900">
    <property type="entry name" value="CB"/>
    <property type="match status" value="1"/>
</dbReference>
<dbReference type="PROSITE" id="PS51898">
    <property type="entry name" value="TYR_RECOMBINASE"/>
    <property type="match status" value="1"/>
</dbReference>
<proteinExistence type="inferred from homology"/>
<comment type="function">
    <text evidence="1">Site-specific tyrosine recombinase, which acts by catalyzing the cutting and rejoining of the recombining DNA molecules. The XerC-XerD complex is essential to convert dimers of the bacterial chromosome into monomers to permit their segregation at cell division. It also contributes to the segregational stability of plasmids.</text>
</comment>
<comment type="subunit">
    <text evidence="1">Forms a cyclic heterotetrameric complex composed of two molecules of XerC and two molecules of XerD.</text>
</comment>
<comment type="subcellular location">
    <subcellularLocation>
        <location evidence="1">Cytoplasm</location>
    </subcellularLocation>
</comment>
<comment type="similarity">
    <text evidence="1">Belongs to the 'phage' integrase family. XerC subfamily.</text>
</comment>
<protein>
    <recommendedName>
        <fullName evidence="1">Tyrosine recombinase XerC</fullName>
    </recommendedName>
</protein>
<feature type="chain" id="PRO_0000095329" description="Tyrosine recombinase XerC">
    <location>
        <begin position="1"/>
        <end position="298"/>
    </location>
</feature>
<feature type="domain" description="Core-binding (CB)" evidence="3">
    <location>
        <begin position="1"/>
        <end position="84"/>
    </location>
</feature>
<feature type="domain" description="Tyr recombinase" evidence="2">
    <location>
        <begin position="105"/>
        <end position="286"/>
    </location>
</feature>
<feature type="active site" evidence="1">
    <location>
        <position position="145"/>
    </location>
</feature>
<feature type="active site" evidence="1">
    <location>
        <position position="169"/>
    </location>
</feature>
<feature type="active site" evidence="1">
    <location>
        <position position="238"/>
    </location>
</feature>
<feature type="active site" evidence="1">
    <location>
        <position position="241"/>
    </location>
</feature>
<feature type="active site" evidence="1">
    <location>
        <position position="264"/>
    </location>
</feature>
<feature type="active site" description="O-(3'-phospho-DNA)-tyrosine intermediate" evidence="1">
    <location>
        <position position="273"/>
    </location>
</feature>